<protein>
    <recommendedName>
        <fullName evidence="1">Translation initiation factor 1A</fullName>
        <shortName evidence="1">aIF-1A</shortName>
    </recommendedName>
</protein>
<evidence type="ECO:0000255" key="1">
    <source>
        <dbReference type="HAMAP-Rule" id="MF_00216"/>
    </source>
</evidence>
<gene>
    <name type="primary">eIF1A</name>
    <name type="ordered locus">Mlab_1550</name>
</gene>
<accession>A2STQ8</accession>
<proteinExistence type="inferred from homology"/>
<organism>
    <name type="scientific">Methanocorpusculum labreanum (strain ATCC 43576 / DSM 4855 / Z)</name>
    <dbReference type="NCBI Taxonomy" id="410358"/>
    <lineage>
        <taxon>Archaea</taxon>
        <taxon>Methanobacteriati</taxon>
        <taxon>Methanobacteriota</taxon>
        <taxon>Stenosarchaea group</taxon>
        <taxon>Methanomicrobia</taxon>
        <taxon>Methanomicrobiales</taxon>
        <taxon>Methanocorpusculaceae</taxon>
        <taxon>Methanocorpusculum</taxon>
    </lineage>
</organism>
<comment type="function">
    <text evidence="1">Seems to be required for maximal rate of protein biosynthesis. Enhances ribosome dissociation into subunits and stabilizes the binding of the initiator Met-tRNA(I) to 40 S ribosomal subunits.</text>
</comment>
<comment type="similarity">
    <text evidence="1">Belongs to the eIF-1A family.</text>
</comment>
<keyword id="KW-0396">Initiation factor</keyword>
<keyword id="KW-0648">Protein biosynthesis</keyword>
<keyword id="KW-1185">Reference proteome</keyword>
<sequence length="105" mass="12381">MGRIENDNQDVSDDGSIIRVKLPNKRIREQFAQAELMLGSNHIRVRCSDGVTRLGRIKGKIKKRVWIREGDILIVVPWDFQDDKCDIIYRYTTPQVDWLRAHKYL</sequence>
<dbReference type="EMBL" id="CP000559">
    <property type="protein sequence ID" value="ABN07714.1"/>
    <property type="molecule type" value="Genomic_DNA"/>
</dbReference>
<dbReference type="RefSeq" id="WP_011833917.1">
    <property type="nucleotide sequence ID" value="NC_008942.1"/>
</dbReference>
<dbReference type="SMR" id="A2STQ8"/>
<dbReference type="STRING" id="410358.Mlab_1550"/>
<dbReference type="GeneID" id="32154294"/>
<dbReference type="KEGG" id="mla:Mlab_1550"/>
<dbReference type="eggNOG" id="arCOG01179">
    <property type="taxonomic scope" value="Archaea"/>
</dbReference>
<dbReference type="HOGENOM" id="CLU_109098_1_2_2"/>
<dbReference type="OrthoDB" id="2586at2157"/>
<dbReference type="Proteomes" id="UP000000365">
    <property type="component" value="Chromosome"/>
</dbReference>
<dbReference type="GO" id="GO:0003723">
    <property type="term" value="F:RNA binding"/>
    <property type="evidence" value="ECO:0007669"/>
    <property type="project" value="InterPro"/>
</dbReference>
<dbReference type="GO" id="GO:0003743">
    <property type="term" value="F:translation initiation factor activity"/>
    <property type="evidence" value="ECO:0007669"/>
    <property type="project" value="UniProtKB-UniRule"/>
</dbReference>
<dbReference type="CDD" id="cd05793">
    <property type="entry name" value="S1_IF1A"/>
    <property type="match status" value="1"/>
</dbReference>
<dbReference type="Gene3D" id="2.40.50.140">
    <property type="entry name" value="Nucleic acid-binding proteins"/>
    <property type="match status" value="1"/>
</dbReference>
<dbReference type="HAMAP" id="MF_00216">
    <property type="entry name" value="aIF_1A"/>
    <property type="match status" value="1"/>
</dbReference>
<dbReference type="InterPro" id="IPR012340">
    <property type="entry name" value="NA-bd_OB-fold"/>
</dbReference>
<dbReference type="InterPro" id="IPR006196">
    <property type="entry name" value="RNA-binding_domain_S1_IF1"/>
</dbReference>
<dbReference type="InterPro" id="IPR001253">
    <property type="entry name" value="TIF_eIF-1A"/>
</dbReference>
<dbReference type="InterPro" id="IPR018104">
    <property type="entry name" value="TIF_eIF-1A_CS"/>
</dbReference>
<dbReference type="NCBIfam" id="TIGR00523">
    <property type="entry name" value="eIF-1A"/>
    <property type="match status" value="1"/>
</dbReference>
<dbReference type="NCBIfam" id="NF003084">
    <property type="entry name" value="PRK04012.1-3"/>
    <property type="match status" value="1"/>
</dbReference>
<dbReference type="NCBIfam" id="NF003085">
    <property type="entry name" value="PRK04012.1-5"/>
    <property type="match status" value="1"/>
</dbReference>
<dbReference type="PANTHER" id="PTHR21668">
    <property type="entry name" value="EIF-1A"/>
    <property type="match status" value="1"/>
</dbReference>
<dbReference type="Pfam" id="PF01176">
    <property type="entry name" value="eIF-1a"/>
    <property type="match status" value="1"/>
</dbReference>
<dbReference type="SMART" id="SM00652">
    <property type="entry name" value="eIF1a"/>
    <property type="match status" value="1"/>
</dbReference>
<dbReference type="SUPFAM" id="SSF50249">
    <property type="entry name" value="Nucleic acid-binding proteins"/>
    <property type="match status" value="1"/>
</dbReference>
<dbReference type="PROSITE" id="PS01262">
    <property type="entry name" value="IF1A"/>
    <property type="match status" value="1"/>
</dbReference>
<dbReference type="PROSITE" id="PS50832">
    <property type="entry name" value="S1_IF1_TYPE"/>
    <property type="match status" value="1"/>
</dbReference>
<name>IF1A_METLZ</name>
<feature type="chain" id="PRO_1000124815" description="Translation initiation factor 1A">
    <location>
        <begin position="1"/>
        <end position="105"/>
    </location>
</feature>
<feature type="domain" description="S1-like" evidence="1">
    <location>
        <begin position="18"/>
        <end position="92"/>
    </location>
</feature>
<reference key="1">
    <citation type="journal article" date="2009" name="Stand. Genomic Sci.">
        <title>Complete genome sequence of Methanocorpusculum labreanum type strain Z.</title>
        <authorList>
            <person name="Anderson I.J."/>
            <person name="Sieprawska-Lupa M."/>
            <person name="Goltsman E."/>
            <person name="Lapidus A."/>
            <person name="Copeland A."/>
            <person name="Glavina Del Rio T."/>
            <person name="Tice H."/>
            <person name="Dalin E."/>
            <person name="Barry K."/>
            <person name="Pitluck S."/>
            <person name="Hauser L."/>
            <person name="Land M."/>
            <person name="Lucas S."/>
            <person name="Richardson P."/>
            <person name="Whitman W.B."/>
            <person name="Kyrpides N.C."/>
        </authorList>
    </citation>
    <scope>NUCLEOTIDE SEQUENCE [LARGE SCALE GENOMIC DNA]</scope>
    <source>
        <strain>ATCC 43576 / DSM 4855 / Z</strain>
    </source>
</reference>